<sequence length="86" mass="9444">MARVTIEDCLDNVDNRFELVLVASKRARQLAKGIAEPLVDVDNDKPTVLALREIAAGKITRDILNQPEHNFATSSLDLALSGDHSF</sequence>
<keyword id="KW-0240">DNA-directed RNA polymerase</keyword>
<keyword id="KW-0548">Nucleotidyltransferase</keyword>
<keyword id="KW-1185">Reference proteome</keyword>
<keyword id="KW-0804">Transcription</keyword>
<keyword id="KW-0808">Transferase</keyword>
<comment type="function">
    <text evidence="1">Promotes RNA polymerase assembly. Latches the N- and C-terminal regions of the beta' subunit thereby facilitating its interaction with the beta and alpha subunits.</text>
</comment>
<comment type="catalytic activity">
    <reaction evidence="1">
        <text>RNA(n) + a ribonucleoside 5'-triphosphate = RNA(n+1) + diphosphate</text>
        <dbReference type="Rhea" id="RHEA:21248"/>
        <dbReference type="Rhea" id="RHEA-COMP:14527"/>
        <dbReference type="Rhea" id="RHEA-COMP:17342"/>
        <dbReference type="ChEBI" id="CHEBI:33019"/>
        <dbReference type="ChEBI" id="CHEBI:61557"/>
        <dbReference type="ChEBI" id="CHEBI:140395"/>
        <dbReference type="EC" id="2.7.7.6"/>
    </reaction>
</comment>
<comment type="subunit">
    <text evidence="1">The RNAP catalytic core consists of 2 alpha, 1 beta, 1 beta' and 1 omega subunit. When a sigma factor is associated with the core the holoenzyme is formed, which can initiate transcription.</text>
</comment>
<comment type="similarity">
    <text evidence="1">Belongs to the RNA polymerase subunit omega family.</text>
</comment>
<accession>Q4FQY6</accession>
<dbReference type="EC" id="2.7.7.6" evidence="1"/>
<dbReference type="EMBL" id="CP000082">
    <property type="protein sequence ID" value="AAZ19572.1"/>
    <property type="molecule type" value="Genomic_DNA"/>
</dbReference>
<dbReference type="RefSeq" id="WP_011280985.1">
    <property type="nucleotide sequence ID" value="NC_007204.1"/>
</dbReference>
<dbReference type="SMR" id="Q4FQY6"/>
<dbReference type="STRING" id="259536.Psyc_1724"/>
<dbReference type="KEGG" id="par:Psyc_1724"/>
<dbReference type="eggNOG" id="COG1758">
    <property type="taxonomic scope" value="Bacteria"/>
</dbReference>
<dbReference type="HOGENOM" id="CLU_125406_5_3_6"/>
<dbReference type="OrthoDB" id="9796300at2"/>
<dbReference type="Proteomes" id="UP000000546">
    <property type="component" value="Chromosome"/>
</dbReference>
<dbReference type="GO" id="GO:0000428">
    <property type="term" value="C:DNA-directed RNA polymerase complex"/>
    <property type="evidence" value="ECO:0007669"/>
    <property type="project" value="UniProtKB-KW"/>
</dbReference>
<dbReference type="GO" id="GO:0003677">
    <property type="term" value="F:DNA binding"/>
    <property type="evidence" value="ECO:0007669"/>
    <property type="project" value="UniProtKB-UniRule"/>
</dbReference>
<dbReference type="GO" id="GO:0003899">
    <property type="term" value="F:DNA-directed RNA polymerase activity"/>
    <property type="evidence" value="ECO:0007669"/>
    <property type="project" value="UniProtKB-UniRule"/>
</dbReference>
<dbReference type="GO" id="GO:0006351">
    <property type="term" value="P:DNA-templated transcription"/>
    <property type="evidence" value="ECO:0007669"/>
    <property type="project" value="UniProtKB-UniRule"/>
</dbReference>
<dbReference type="Gene3D" id="3.90.940.10">
    <property type="match status" value="1"/>
</dbReference>
<dbReference type="HAMAP" id="MF_00366">
    <property type="entry name" value="RNApol_bact_RpoZ"/>
    <property type="match status" value="1"/>
</dbReference>
<dbReference type="InterPro" id="IPR003716">
    <property type="entry name" value="DNA-dir_RNA_pol_omega"/>
</dbReference>
<dbReference type="InterPro" id="IPR006110">
    <property type="entry name" value="Pol_omega/Rpo6/RPB6"/>
</dbReference>
<dbReference type="InterPro" id="IPR036161">
    <property type="entry name" value="RPB6/omega-like_sf"/>
</dbReference>
<dbReference type="NCBIfam" id="TIGR00690">
    <property type="entry name" value="rpoZ"/>
    <property type="match status" value="1"/>
</dbReference>
<dbReference type="PANTHER" id="PTHR34476">
    <property type="entry name" value="DNA-DIRECTED RNA POLYMERASE SUBUNIT OMEGA"/>
    <property type="match status" value="1"/>
</dbReference>
<dbReference type="PANTHER" id="PTHR34476:SF1">
    <property type="entry name" value="DNA-DIRECTED RNA POLYMERASE SUBUNIT OMEGA"/>
    <property type="match status" value="1"/>
</dbReference>
<dbReference type="Pfam" id="PF01192">
    <property type="entry name" value="RNA_pol_Rpb6"/>
    <property type="match status" value="1"/>
</dbReference>
<dbReference type="SMART" id="SM01409">
    <property type="entry name" value="RNA_pol_Rpb6"/>
    <property type="match status" value="1"/>
</dbReference>
<dbReference type="SUPFAM" id="SSF63562">
    <property type="entry name" value="RPB6/omega subunit-like"/>
    <property type="match status" value="1"/>
</dbReference>
<gene>
    <name evidence="1" type="primary">rpoZ</name>
    <name type="ordered locus">Psyc_1724</name>
</gene>
<protein>
    <recommendedName>
        <fullName evidence="1">DNA-directed RNA polymerase subunit omega</fullName>
        <shortName evidence="1">RNAP omega subunit</shortName>
        <ecNumber evidence="1">2.7.7.6</ecNumber>
    </recommendedName>
    <alternativeName>
        <fullName evidence="1">RNA polymerase omega subunit</fullName>
    </alternativeName>
    <alternativeName>
        <fullName evidence="1">Transcriptase subunit omega</fullName>
    </alternativeName>
</protein>
<proteinExistence type="inferred from homology"/>
<name>RPOZ_PSYA2</name>
<organism>
    <name type="scientific">Psychrobacter arcticus (strain DSM 17307 / VKM B-2377 / 273-4)</name>
    <dbReference type="NCBI Taxonomy" id="259536"/>
    <lineage>
        <taxon>Bacteria</taxon>
        <taxon>Pseudomonadati</taxon>
        <taxon>Pseudomonadota</taxon>
        <taxon>Gammaproteobacteria</taxon>
        <taxon>Moraxellales</taxon>
        <taxon>Moraxellaceae</taxon>
        <taxon>Psychrobacter</taxon>
    </lineage>
</organism>
<reference key="1">
    <citation type="journal article" date="2010" name="Appl. Environ. Microbiol.">
        <title>The genome sequence of Psychrobacter arcticus 273-4, a psychroactive Siberian permafrost bacterium, reveals mechanisms for adaptation to low-temperature growth.</title>
        <authorList>
            <person name="Ayala-del-Rio H.L."/>
            <person name="Chain P.S."/>
            <person name="Grzymski J.J."/>
            <person name="Ponder M.A."/>
            <person name="Ivanova N."/>
            <person name="Bergholz P.W."/>
            <person name="Di Bartolo G."/>
            <person name="Hauser L."/>
            <person name="Land M."/>
            <person name="Bakermans C."/>
            <person name="Rodrigues D."/>
            <person name="Klappenbach J."/>
            <person name="Zarka D."/>
            <person name="Larimer F."/>
            <person name="Richardson P."/>
            <person name="Murray A."/>
            <person name="Thomashow M."/>
            <person name="Tiedje J.M."/>
        </authorList>
    </citation>
    <scope>NUCLEOTIDE SEQUENCE [LARGE SCALE GENOMIC DNA]</scope>
    <source>
        <strain>DSM 17307 / VKM B-2377 / 273-4</strain>
    </source>
</reference>
<evidence type="ECO:0000255" key="1">
    <source>
        <dbReference type="HAMAP-Rule" id="MF_00366"/>
    </source>
</evidence>
<feature type="chain" id="PRO_0000237494" description="DNA-directed RNA polymerase subunit omega">
    <location>
        <begin position="1"/>
        <end position="86"/>
    </location>
</feature>